<feature type="chain" id="PRO_0000257468" description="tRNA (guanine-N(1)-)-methyltransferase">
    <location>
        <begin position="1"/>
        <end position="255"/>
    </location>
</feature>
<feature type="binding site" evidence="1">
    <location>
        <position position="113"/>
    </location>
    <ligand>
        <name>S-adenosyl-L-methionine</name>
        <dbReference type="ChEBI" id="CHEBI:59789"/>
    </ligand>
</feature>
<feature type="binding site" evidence="1">
    <location>
        <begin position="133"/>
        <end position="138"/>
    </location>
    <ligand>
        <name>S-adenosyl-L-methionine</name>
        <dbReference type="ChEBI" id="CHEBI:59789"/>
    </ligand>
</feature>
<evidence type="ECO:0000255" key="1">
    <source>
        <dbReference type="HAMAP-Rule" id="MF_00605"/>
    </source>
</evidence>
<reference key="1">
    <citation type="journal article" date="2005" name="Nucleic Acids Res.">
        <title>Genome dynamics and diversity of Shigella species, the etiologic agents of bacillary dysentery.</title>
        <authorList>
            <person name="Yang F."/>
            <person name="Yang J."/>
            <person name="Zhang X."/>
            <person name="Chen L."/>
            <person name="Jiang Y."/>
            <person name="Yan Y."/>
            <person name="Tang X."/>
            <person name="Wang J."/>
            <person name="Xiong Z."/>
            <person name="Dong J."/>
            <person name="Xue Y."/>
            <person name="Zhu Y."/>
            <person name="Xu X."/>
            <person name="Sun L."/>
            <person name="Chen S."/>
            <person name="Nie H."/>
            <person name="Peng J."/>
            <person name="Xu J."/>
            <person name="Wang Y."/>
            <person name="Yuan Z."/>
            <person name="Wen Y."/>
            <person name="Yao Z."/>
            <person name="Shen Y."/>
            <person name="Qiang B."/>
            <person name="Hou Y."/>
            <person name="Yu J."/>
            <person name="Jin Q."/>
        </authorList>
    </citation>
    <scope>NUCLEOTIDE SEQUENCE [LARGE SCALE GENOMIC DNA]</scope>
    <source>
        <strain>Sd197</strain>
    </source>
</reference>
<proteinExistence type="inferred from homology"/>
<name>TRMD_SHIDS</name>
<keyword id="KW-0963">Cytoplasm</keyword>
<keyword id="KW-0489">Methyltransferase</keyword>
<keyword id="KW-1185">Reference proteome</keyword>
<keyword id="KW-0949">S-adenosyl-L-methionine</keyword>
<keyword id="KW-0808">Transferase</keyword>
<keyword id="KW-0819">tRNA processing</keyword>
<comment type="function">
    <text evidence="1">Specifically methylates guanosine-37 in various tRNAs.</text>
</comment>
<comment type="catalytic activity">
    <reaction evidence="1">
        <text>guanosine(37) in tRNA + S-adenosyl-L-methionine = N(1)-methylguanosine(37) in tRNA + S-adenosyl-L-homocysteine + H(+)</text>
        <dbReference type="Rhea" id="RHEA:36899"/>
        <dbReference type="Rhea" id="RHEA-COMP:10145"/>
        <dbReference type="Rhea" id="RHEA-COMP:10147"/>
        <dbReference type="ChEBI" id="CHEBI:15378"/>
        <dbReference type="ChEBI" id="CHEBI:57856"/>
        <dbReference type="ChEBI" id="CHEBI:59789"/>
        <dbReference type="ChEBI" id="CHEBI:73542"/>
        <dbReference type="ChEBI" id="CHEBI:74269"/>
        <dbReference type="EC" id="2.1.1.228"/>
    </reaction>
</comment>
<comment type="subunit">
    <text evidence="1">Homodimer.</text>
</comment>
<comment type="subcellular location">
    <subcellularLocation>
        <location evidence="1">Cytoplasm</location>
    </subcellularLocation>
</comment>
<comment type="similarity">
    <text evidence="1">Belongs to the RNA methyltransferase TrmD family.</text>
</comment>
<sequence>MWIGIISLFPEMFRAITDYGVTGRAVKNGLLSIQSWSPRDFTHDRHRTVDDRPYGGGPGMLMMVQPLRDAIHAAKAAAGEGAKVIYLSPQGRKLDQAGVSELATNQKLILVCGRYEGIDERVIQTEIDEEWSIGDYVLSGGELPAMTLIDSVSRFIPGVLGHEASATEDSFAEGLLDCPHYTRPEVLEGMEVPPVLLSGNHAEIRRWRLKQSLGRTWLRRPELLENLALTEEQARLLAEFKTEHAQQQHKHDGMA</sequence>
<organism>
    <name type="scientific">Shigella dysenteriae serotype 1 (strain Sd197)</name>
    <dbReference type="NCBI Taxonomy" id="300267"/>
    <lineage>
        <taxon>Bacteria</taxon>
        <taxon>Pseudomonadati</taxon>
        <taxon>Pseudomonadota</taxon>
        <taxon>Gammaproteobacteria</taxon>
        <taxon>Enterobacterales</taxon>
        <taxon>Enterobacteriaceae</taxon>
        <taxon>Shigella</taxon>
    </lineage>
</organism>
<protein>
    <recommendedName>
        <fullName evidence="1">tRNA (guanine-N(1)-)-methyltransferase</fullName>
        <ecNumber evidence="1">2.1.1.228</ecNumber>
    </recommendedName>
    <alternativeName>
        <fullName evidence="1">M1G-methyltransferase</fullName>
    </alternativeName>
    <alternativeName>
        <fullName evidence="1">tRNA [GM37] methyltransferase</fullName>
    </alternativeName>
</protein>
<accession>Q32CY1</accession>
<gene>
    <name evidence="1" type="primary">trmD</name>
    <name type="ordered locus">SDY_2781</name>
</gene>
<dbReference type="EC" id="2.1.1.228" evidence="1"/>
<dbReference type="EMBL" id="CP000034">
    <property type="protein sequence ID" value="ABB62824.1"/>
    <property type="molecule type" value="Genomic_DNA"/>
</dbReference>
<dbReference type="RefSeq" id="WP_000264777.1">
    <property type="nucleotide sequence ID" value="NC_007606.1"/>
</dbReference>
<dbReference type="RefSeq" id="YP_404315.1">
    <property type="nucleotide sequence ID" value="NC_007606.1"/>
</dbReference>
<dbReference type="SMR" id="Q32CY1"/>
<dbReference type="STRING" id="300267.SDY_2781"/>
<dbReference type="EnsemblBacteria" id="ABB62824">
    <property type="protein sequence ID" value="ABB62824"/>
    <property type="gene ID" value="SDY_2781"/>
</dbReference>
<dbReference type="GeneID" id="93774457"/>
<dbReference type="KEGG" id="sdy:SDY_2781"/>
<dbReference type="PATRIC" id="fig|300267.13.peg.3352"/>
<dbReference type="HOGENOM" id="CLU_047363_0_1_6"/>
<dbReference type="Proteomes" id="UP000002716">
    <property type="component" value="Chromosome"/>
</dbReference>
<dbReference type="GO" id="GO:0005829">
    <property type="term" value="C:cytosol"/>
    <property type="evidence" value="ECO:0007669"/>
    <property type="project" value="TreeGrafter"/>
</dbReference>
<dbReference type="GO" id="GO:0052906">
    <property type="term" value="F:tRNA (guanine(37)-N1)-methyltransferase activity"/>
    <property type="evidence" value="ECO:0007669"/>
    <property type="project" value="UniProtKB-UniRule"/>
</dbReference>
<dbReference type="GO" id="GO:0002939">
    <property type="term" value="P:tRNA N1-guanine methylation"/>
    <property type="evidence" value="ECO:0007669"/>
    <property type="project" value="TreeGrafter"/>
</dbReference>
<dbReference type="CDD" id="cd18080">
    <property type="entry name" value="TrmD-like"/>
    <property type="match status" value="1"/>
</dbReference>
<dbReference type="FunFam" id="1.10.1270.20:FF:000001">
    <property type="entry name" value="tRNA (guanine-N(1)-)-methyltransferase"/>
    <property type="match status" value="1"/>
</dbReference>
<dbReference type="FunFam" id="3.40.1280.10:FF:000001">
    <property type="entry name" value="tRNA (guanine-N(1)-)-methyltransferase"/>
    <property type="match status" value="1"/>
</dbReference>
<dbReference type="Gene3D" id="3.40.1280.10">
    <property type="match status" value="1"/>
</dbReference>
<dbReference type="Gene3D" id="1.10.1270.20">
    <property type="entry name" value="tRNA(m1g37)methyltransferase, domain 2"/>
    <property type="match status" value="1"/>
</dbReference>
<dbReference type="HAMAP" id="MF_00605">
    <property type="entry name" value="TrmD"/>
    <property type="match status" value="1"/>
</dbReference>
<dbReference type="InterPro" id="IPR029028">
    <property type="entry name" value="Alpha/beta_knot_MTases"/>
</dbReference>
<dbReference type="InterPro" id="IPR023148">
    <property type="entry name" value="tRNA_m1G_MeTrfase_C_sf"/>
</dbReference>
<dbReference type="InterPro" id="IPR002649">
    <property type="entry name" value="tRNA_m1G_MeTrfase_TrmD"/>
</dbReference>
<dbReference type="InterPro" id="IPR029026">
    <property type="entry name" value="tRNA_m1G_MTases_N"/>
</dbReference>
<dbReference type="InterPro" id="IPR016009">
    <property type="entry name" value="tRNA_MeTrfase_TRMD/TRM10"/>
</dbReference>
<dbReference type="NCBIfam" id="NF000648">
    <property type="entry name" value="PRK00026.1"/>
    <property type="match status" value="1"/>
</dbReference>
<dbReference type="NCBIfam" id="TIGR00088">
    <property type="entry name" value="trmD"/>
    <property type="match status" value="1"/>
</dbReference>
<dbReference type="PANTHER" id="PTHR46417">
    <property type="entry name" value="TRNA (GUANINE-N(1)-)-METHYLTRANSFERASE"/>
    <property type="match status" value="1"/>
</dbReference>
<dbReference type="PANTHER" id="PTHR46417:SF1">
    <property type="entry name" value="TRNA (GUANINE-N(1)-)-METHYLTRANSFERASE"/>
    <property type="match status" value="1"/>
</dbReference>
<dbReference type="Pfam" id="PF01746">
    <property type="entry name" value="tRNA_m1G_MT"/>
    <property type="match status" value="1"/>
</dbReference>
<dbReference type="PIRSF" id="PIRSF000386">
    <property type="entry name" value="tRNA_mtase"/>
    <property type="match status" value="1"/>
</dbReference>
<dbReference type="SUPFAM" id="SSF75217">
    <property type="entry name" value="alpha/beta knot"/>
    <property type="match status" value="1"/>
</dbReference>